<comment type="function">
    <text evidence="1">Removes the N-terminal methionine from nascent proteins. The N-terminal methionine is often cleaved when the second residue in the primary sequence is small and uncharged (Met-Ala-, Cys, Gly, Pro, Ser, Thr, or Val). Requires deformylation of the N(alpha)-formylated initiator methionine before it can be hydrolyzed.</text>
</comment>
<comment type="catalytic activity">
    <reaction evidence="1">
        <text>Release of N-terminal amino acids, preferentially methionine, from peptides and arylamides.</text>
        <dbReference type="EC" id="3.4.11.18"/>
    </reaction>
</comment>
<comment type="cofactor">
    <cofactor evidence="1">
        <name>Co(2+)</name>
        <dbReference type="ChEBI" id="CHEBI:48828"/>
    </cofactor>
    <cofactor evidence="1">
        <name>Zn(2+)</name>
        <dbReference type="ChEBI" id="CHEBI:29105"/>
    </cofactor>
    <cofactor evidence="1">
        <name>Mn(2+)</name>
        <dbReference type="ChEBI" id="CHEBI:29035"/>
    </cofactor>
    <cofactor evidence="1">
        <name>Fe(2+)</name>
        <dbReference type="ChEBI" id="CHEBI:29033"/>
    </cofactor>
    <text evidence="1">Binds 2 divalent metal cations per subunit. Has a high-affinity and a low affinity metal-binding site. The true nature of the physiological cofactor is under debate. The enzyme is active with cobalt, zinc, manganese or divalent iron ions. Most likely, methionine aminopeptidases function as mononuclear Fe(2+)-metalloproteases under physiological conditions, and the catalytically relevant metal-binding site has been assigned to the histidine-containing high-affinity site.</text>
</comment>
<comment type="subcellular location">
    <subcellularLocation>
        <location evidence="1">Mitochondrion</location>
    </subcellularLocation>
</comment>
<comment type="similarity">
    <text evidence="1">Belongs to the peptidase M24A family. Methionine aminopeptidase type 1 subfamily.</text>
</comment>
<feature type="transit peptide" description="Mitochondrion" evidence="1">
    <location>
        <begin position="1"/>
        <end position="47"/>
    </location>
</feature>
<feature type="chain" id="PRO_0000314128" description="Methionine aminopeptidase 1D, mitochondrial">
    <location>
        <begin position="48"/>
        <end position="338"/>
    </location>
</feature>
<feature type="binding site" evidence="1">
    <location>
        <position position="164"/>
    </location>
    <ligand>
        <name>substrate</name>
    </ligand>
</feature>
<feature type="binding site" evidence="1">
    <location>
        <position position="181"/>
    </location>
    <ligand>
        <name>a divalent metal cation</name>
        <dbReference type="ChEBI" id="CHEBI:60240"/>
        <label>1</label>
    </ligand>
</feature>
<feature type="binding site" evidence="1">
    <location>
        <position position="192"/>
    </location>
    <ligand>
        <name>a divalent metal cation</name>
        <dbReference type="ChEBI" id="CHEBI:60240"/>
        <label>1</label>
    </ligand>
</feature>
<feature type="binding site" evidence="1">
    <location>
        <position position="192"/>
    </location>
    <ligand>
        <name>a divalent metal cation</name>
        <dbReference type="ChEBI" id="CHEBI:60240"/>
        <label>2</label>
        <note>catalytic</note>
    </ligand>
</feature>
<feature type="binding site" evidence="1">
    <location>
        <position position="255"/>
    </location>
    <ligand>
        <name>a divalent metal cation</name>
        <dbReference type="ChEBI" id="CHEBI:60240"/>
        <label>2</label>
        <note>catalytic</note>
    </ligand>
</feature>
<feature type="binding site" evidence="1">
    <location>
        <position position="262"/>
    </location>
    <ligand>
        <name>substrate</name>
    </ligand>
</feature>
<feature type="binding site" evidence="1">
    <location>
        <position position="287"/>
    </location>
    <ligand>
        <name>a divalent metal cation</name>
        <dbReference type="ChEBI" id="CHEBI:60240"/>
        <label>2</label>
        <note>catalytic</note>
    </ligand>
</feature>
<feature type="binding site" evidence="1">
    <location>
        <position position="318"/>
    </location>
    <ligand>
        <name>a divalent metal cation</name>
        <dbReference type="ChEBI" id="CHEBI:60240"/>
        <label>1</label>
    </ligand>
</feature>
<feature type="binding site" evidence="1">
    <location>
        <position position="318"/>
    </location>
    <ligand>
        <name>a divalent metal cation</name>
        <dbReference type="ChEBI" id="CHEBI:60240"/>
        <label>2</label>
        <note>catalytic</note>
    </ligand>
</feature>
<keyword id="KW-0031">Aminopeptidase</keyword>
<keyword id="KW-0378">Hydrolase</keyword>
<keyword id="KW-0479">Metal-binding</keyword>
<keyword id="KW-0496">Mitochondrion</keyword>
<keyword id="KW-0645">Protease</keyword>
<keyword id="KW-1185">Reference proteome</keyword>
<keyword id="KW-0809">Transit peptide</keyword>
<reference key="1">
    <citation type="submission" date="2005-05" db="EMBL/GenBank/DDBJ databases">
        <authorList>
            <consortium name="NIH - Zebrafish Gene Collection (ZGC) project"/>
        </authorList>
    </citation>
    <scope>NUCLEOTIDE SEQUENCE [LARGE SCALE MRNA]</scope>
    <source>
        <tissue>Olfactory epithelium</tissue>
    </source>
</reference>
<proteinExistence type="evidence at transcript level"/>
<gene>
    <name type="primary">metap1d</name>
    <name type="synonym">map1d</name>
    <name type="ORF">zgc:110461</name>
</gene>
<evidence type="ECO:0000255" key="1">
    <source>
        <dbReference type="HAMAP-Rule" id="MF_03174"/>
    </source>
</evidence>
<organism>
    <name type="scientific">Danio rerio</name>
    <name type="common">Zebrafish</name>
    <name type="synonym">Brachydanio rerio</name>
    <dbReference type="NCBI Taxonomy" id="7955"/>
    <lineage>
        <taxon>Eukaryota</taxon>
        <taxon>Metazoa</taxon>
        <taxon>Chordata</taxon>
        <taxon>Craniata</taxon>
        <taxon>Vertebrata</taxon>
        <taxon>Euteleostomi</taxon>
        <taxon>Actinopterygii</taxon>
        <taxon>Neopterygii</taxon>
        <taxon>Teleostei</taxon>
        <taxon>Ostariophysi</taxon>
        <taxon>Cypriniformes</taxon>
        <taxon>Danionidae</taxon>
        <taxon>Danioninae</taxon>
        <taxon>Danio</taxon>
    </lineage>
</organism>
<name>MAP12_DANRE</name>
<dbReference type="EC" id="3.4.11.18" evidence="1"/>
<dbReference type="EMBL" id="BC095283">
    <property type="protein sequence ID" value="AAH95283.1"/>
    <property type="molecule type" value="mRNA"/>
</dbReference>
<dbReference type="RefSeq" id="NP_001019563.1">
    <property type="nucleotide sequence ID" value="NM_001024392.1"/>
</dbReference>
<dbReference type="SMR" id="Q4VBS4"/>
<dbReference type="FunCoup" id="Q4VBS4">
    <property type="interactions" value="223"/>
</dbReference>
<dbReference type="STRING" id="7955.ENSDARP00000010471"/>
<dbReference type="MEROPS" id="M24.028"/>
<dbReference type="PaxDb" id="7955-ENSDARP00000010471"/>
<dbReference type="GeneID" id="554090"/>
<dbReference type="KEGG" id="dre:554090"/>
<dbReference type="AGR" id="ZFIN:ZDB-GENE-050522-71"/>
<dbReference type="CTD" id="254042"/>
<dbReference type="ZFIN" id="ZDB-GENE-050522-71">
    <property type="gene designation" value="metap1d"/>
</dbReference>
<dbReference type="eggNOG" id="KOG2738">
    <property type="taxonomic scope" value="Eukaryota"/>
</dbReference>
<dbReference type="InParanoid" id="Q4VBS4"/>
<dbReference type="OrthoDB" id="3209743at2759"/>
<dbReference type="PhylomeDB" id="Q4VBS4"/>
<dbReference type="PRO" id="PR:Q4VBS4"/>
<dbReference type="Proteomes" id="UP000000437">
    <property type="component" value="Alternate scaffold 1"/>
</dbReference>
<dbReference type="Proteomes" id="UP000000437">
    <property type="component" value="Chromosome 1"/>
</dbReference>
<dbReference type="GO" id="GO:0005739">
    <property type="term" value="C:mitochondrion"/>
    <property type="evidence" value="ECO:0000250"/>
    <property type="project" value="HGNC-UCL"/>
</dbReference>
<dbReference type="GO" id="GO:0004239">
    <property type="term" value="F:initiator methionyl aminopeptidase activity"/>
    <property type="evidence" value="ECO:0007669"/>
    <property type="project" value="UniProtKB-UniRule"/>
</dbReference>
<dbReference type="GO" id="GO:0046872">
    <property type="term" value="F:metal ion binding"/>
    <property type="evidence" value="ECO:0007669"/>
    <property type="project" value="UniProtKB-UniRule"/>
</dbReference>
<dbReference type="GO" id="GO:0070006">
    <property type="term" value="F:metalloaminopeptidase activity"/>
    <property type="evidence" value="ECO:0000318"/>
    <property type="project" value="GO_Central"/>
</dbReference>
<dbReference type="GO" id="GO:0006508">
    <property type="term" value="P:proteolysis"/>
    <property type="evidence" value="ECO:0007669"/>
    <property type="project" value="UniProtKB-KW"/>
</dbReference>
<dbReference type="CDD" id="cd01086">
    <property type="entry name" value="MetAP1"/>
    <property type="match status" value="1"/>
</dbReference>
<dbReference type="FunFam" id="3.90.230.10:FF:000011">
    <property type="entry name" value="Methionine aminopeptidase"/>
    <property type="match status" value="1"/>
</dbReference>
<dbReference type="Gene3D" id="3.90.230.10">
    <property type="entry name" value="Creatinase/methionine aminopeptidase superfamily"/>
    <property type="match status" value="1"/>
</dbReference>
<dbReference type="HAMAP" id="MF_01974">
    <property type="entry name" value="MetAP_1"/>
    <property type="match status" value="1"/>
</dbReference>
<dbReference type="InterPro" id="IPR036005">
    <property type="entry name" value="Creatinase/aminopeptidase-like"/>
</dbReference>
<dbReference type="InterPro" id="IPR000994">
    <property type="entry name" value="Pept_M24"/>
</dbReference>
<dbReference type="InterPro" id="IPR001714">
    <property type="entry name" value="Pept_M24_MAP"/>
</dbReference>
<dbReference type="InterPro" id="IPR002467">
    <property type="entry name" value="Pept_M24A_MAP1"/>
</dbReference>
<dbReference type="NCBIfam" id="TIGR00500">
    <property type="entry name" value="met_pdase_I"/>
    <property type="match status" value="1"/>
</dbReference>
<dbReference type="PANTHER" id="PTHR43330">
    <property type="entry name" value="METHIONINE AMINOPEPTIDASE"/>
    <property type="match status" value="1"/>
</dbReference>
<dbReference type="PANTHER" id="PTHR43330:SF8">
    <property type="entry name" value="METHIONINE AMINOPEPTIDASE 1D, MITOCHONDRIAL"/>
    <property type="match status" value="1"/>
</dbReference>
<dbReference type="Pfam" id="PF00557">
    <property type="entry name" value="Peptidase_M24"/>
    <property type="match status" value="1"/>
</dbReference>
<dbReference type="PRINTS" id="PR00599">
    <property type="entry name" value="MAPEPTIDASE"/>
</dbReference>
<dbReference type="SUPFAM" id="SSF55920">
    <property type="entry name" value="Creatinase/aminopeptidase"/>
    <property type="match status" value="1"/>
</dbReference>
<dbReference type="PROSITE" id="PS00680">
    <property type="entry name" value="MAP_1"/>
    <property type="match status" value="1"/>
</dbReference>
<accession>Q4VBS4</accession>
<protein>
    <recommendedName>
        <fullName evidence="1">Methionine aminopeptidase 1D, mitochondrial</fullName>
        <shortName evidence="1">MAP 1D</shortName>
        <shortName evidence="1">MetAP 1D</shortName>
        <ecNumber evidence="1">3.4.11.18</ecNumber>
    </recommendedName>
    <alternativeName>
        <fullName>Methionyl aminopeptidase type 1D, mitochondrial</fullName>
    </alternativeName>
    <alternativeName>
        <fullName evidence="1">Peptidase M 1D</fullName>
    </alternativeName>
</protein>
<sequence>MAAPCAAQCLYRTGGLRLLQRISRLPHCHKDASLAHQCQFHRSFFWRKPKTSHSVVRPAIVRPAYPVPKHIQRPDYVSSSKVPEWPDYIEIKDEEQIQGLRRACQLARHILLLTGNSLKVGMTTDEIDFIVHQEAIRHNGYPSPLHYGGFPKSVCTSVNNVVCHGIPDSRPLQDGDIINIDVTVYLEGYHGDTSETFLIGSVNDQGRKLVDVARQCRDQAIAACGPGQPLCVIGNIISNIANSNGFRVCPYFIGHGIGEYFHGHPEIWHHANDNDLKMEEGMSFTIEPILMEGTSGFRILSDKWTAVSVDDKRSAQFEHTVVITSDGVEILTKLPEED</sequence>